<gene>
    <name evidence="1" type="primary">tatA</name>
    <name type="ordered locus">BceJ2315_03250</name>
    <name type="ORF">BCAL0323</name>
</gene>
<sequence>MGGLSIWHWLIVLLIVALVFGTKKLRNIGNDLGSAVKGFKDGMKEGETPADAQQLPRSGAVDVNAKETTRSDSNKA</sequence>
<keyword id="KW-0997">Cell inner membrane</keyword>
<keyword id="KW-1003">Cell membrane</keyword>
<keyword id="KW-0472">Membrane</keyword>
<keyword id="KW-0653">Protein transport</keyword>
<keyword id="KW-0811">Translocation</keyword>
<keyword id="KW-0812">Transmembrane</keyword>
<keyword id="KW-1133">Transmembrane helix</keyword>
<keyword id="KW-0813">Transport</keyword>
<reference key="1">
    <citation type="journal article" date="2009" name="J. Bacteriol.">
        <title>The genome of Burkholderia cenocepacia J2315, an epidemic pathogen of cystic fibrosis patients.</title>
        <authorList>
            <person name="Holden M.T."/>
            <person name="Seth-Smith H.M."/>
            <person name="Crossman L.C."/>
            <person name="Sebaihia M."/>
            <person name="Bentley S.D."/>
            <person name="Cerdeno-Tarraga A.M."/>
            <person name="Thomson N.R."/>
            <person name="Bason N."/>
            <person name="Quail M.A."/>
            <person name="Sharp S."/>
            <person name="Cherevach I."/>
            <person name="Churcher C."/>
            <person name="Goodhead I."/>
            <person name="Hauser H."/>
            <person name="Holroyd N."/>
            <person name="Mungall K."/>
            <person name="Scott P."/>
            <person name="Walker D."/>
            <person name="White B."/>
            <person name="Rose H."/>
            <person name="Iversen P."/>
            <person name="Mil-Homens D."/>
            <person name="Rocha E.P."/>
            <person name="Fialho A.M."/>
            <person name="Baldwin A."/>
            <person name="Dowson C."/>
            <person name="Barrell B.G."/>
            <person name="Govan J.R."/>
            <person name="Vandamme P."/>
            <person name="Hart C.A."/>
            <person name="Mahenthiralingam E."/>
            <person name="Parkhill J."/>
        </authorList>
    </citation>
    <scope>NUCLEOTIDE SEQUENCE [LARGE SCALE GENOMIC DNA]</scope>
    <source>
        <strain>ATCC BAA-245 / DSM 16553 / LMG 16656 / NCTC 13227 / J2315 / CF5610</strain>
    </source>
</reference>
<organism>
    <name type="scientific">Burkholderia cenocepacia (strain ATCC BAA-245 / DSM 16553 / LMG 16656 / NCTC 13227 / J2315 / CF5610)</name>
    <name type="common">Burkholderia cepacia (strain J2315)</name>
    <dbReference type="NCBI Taxonomy" id="216591"/>
    <lineage>
        <taxon>Bacteria</taxon>
        <taxon>Pseudomonadati</taxon>
        <taxon>Pseudomonadota</taxon>
        <taxon>Betaproteobacteria</taxon>
        <taxon>Burkholderiales</taxon>
        <taxon>Burkholderiaceae</taxon>
        <taxon>Burkholderia</taxon>
        <taxon>Burkholderia cepacia complex</taxon>
    </lineage>
</organism>
<name>TATA_BURCJ</name>
<protein>
    <recommendedName>
        <fullName evidence="1">Sec-independent protein translocase protein TatA</fullName>
    </recommendedName>
</protein>
<comment type="function">
    <text evidence="1">Part of the twin-arginine translocation (Tat) system that transports large folded proteins containing a characteristic twin-arginine motif in their signal peptide across membranes. TatA could form the protein-conducting channel of the Tat system.</text>
</comment>
<comment type="subunit">
    <text evidence="1">The Tat system comprises two distinct complexes: a TatABC complex, containing multiple copies of TatA, TatB and TatC subunits, and a separate TatA complex, containing only TatA subunits. Substrates initially bind to the TatABC complex, which probably triggers association of the separate TatA complex to form the active translocon.</text>
</comment>
<comment type="subcellular location">
    <subcellularLocation>
        <location evidence="1">Cell inner membrane</location>
        <topology evidence="1">Single-pass membrane protein</topology>
    </subcellularLocation>
</comment>
<comment type="similarity">
    <text evidence="1">Belongs to the TatA/E family.</text>
</comment>
<accession>B4E646</accession>
<dbReference type="EMBL" id="AM747720">
    <property type="protein sequence ID" value="CAR50633.1"/>
    <property type="molecule type" value="Genomic_DNA"/>
</dbReference>
<dbReference type="RefSeq" id="WP_006477115.1">
    <property type="nucleotide sequence ID" value="NC_011000.1"/>
</dbReference>
<dbReference type="SMR" id="B4E646"/>
<dbReference type="GeneID" id="83047218"/>
<dbReference type="KEGG" id="bcj:BCAL0323"/>
<dbReference type="eggNOG" id="COG1826">
    <property type="taxonomic scope" value="Bacteria"/>
</dbReference>
<dbReference type="HOGENOM" id="CLU_086034_5_3_4"/>
<dbReference type="BioCyc" id="BCEN216591:G1G1V-368-MONOMER"/>
<dbReference type="Proteomes" id="UP000001035">
    <property type="component" value="Chromosome 1"/>
</dbReference>
<dbReference type="GO" id="GO:0033281">
    <property type="term" value="C:TAT protein transport complex"/>
    <property type="evidence" value="ECO:0007669"/>
    <property type="project" value="UniProtKB-UniRule"/>
</dbReference>
<dbReference type="GO" id="GO:0008320">
    <property type="term" value="F:protein transmembrane transporter activity"/>
    <property type="evidence" value="ECO:0007669"/>
    <property type="project" value="UniProtKB-UniRule"/>
</dbReference>
<dbReference type="GO" id="GO:0043953">
    <property type="term" value="P:protein transport by the Tat complex"/>
    <property type="evidence" value="ECO:0007669"/>
    <property type="project" value="UniProtKB-UniRule"/>
</dbReference>
<dbReference type="Gene3D" id="1.20.5.3310">
    <property type="match status" value="1"/>
</dbReference>
<dbReference type="HAMAP" id="MF_00236">
    <property type="entry name" value="TatA_E"/>
    <property type="match status" value="1"/>
</dbReference>
<dbReference type="InterPro" id="IPR003369">
    <property type="entry name" value="TatA/B/E"/>
</dbReference>
<dbReference type="InterPro" id="IPR006312">
    <property type="entry name" value="TatA/E"/>
</dbReference>
<dbReference type="NCBIfam" id="NF002813">
    <property type="entry name" value="PRK02958.1"/>
    <property type="match status" value="1"/>
</dbReference>
<dbReference type="NCBIfam" id="TIGR01411">
    <property type="entry name" value="tatAE"/>
    <property type="match status" value="1"/>
</dbReference>
<dbReference type="PANTHER" id="PTHR42982">
    <property type="entry name" value="SEC-INDEPENDENT PROTEIN TRANSLOCASE PROTEIN TATA"/>
    <property type="match status" value="1"/>
</dbReference>
<dbReference type="PANTHER" id="PTHR42982:SF1">
    <property type="entry name" value="SEC-INDEPENDENT PROTEIN TRANSLOCASE PROTEIN TATA"/>
    <property type="match status" value="1"/>
</dbReference>
<dbReference type="Pfam" id="PF02416">
    <property type="entry name" value="TatA_B_E"/>
    <property type="match status" value="1"/>
</dbReference>
<feature type="chain" id="PRO_1000197858" description="Sec-independent protein translocase protein TatA">
    <location>
        <begin position="1"/>
        <end position="76"/>
    </location>
</feature>
<feature type="transmembrane region" description="Helical" evidence="1">
    <location>
        <begin position="1"/>
        <end position="21"/>
    </location>
</feature>
<feature type="region of interest" description="Disordered" evidence="2">
    <location>
        <begin position="40"/>
        <end position="76"/>
    </location>
</feature>
<feature type="compositionally biased region" description="Basic and acidic residues" evidence="2">
    <location>
        <begin position="64"/>
        <end position="76"/>
    </location>
</feature>
<evidence type="ECO:0000255" key="1">
    <source>
        <dbReference type="HAMAP-Rule" id="MF_00236"/>
    </source>
</evidence>
<evidence type="ECO:0000256" key="2">
    <source>
        <dbReference type="SAM" id="MobiDB-lite"/>
    </source>
</evidence>
<proteinExistence type="inferred from homology"/>